<accession>A6QJ09</accession>
<protein>
    <recommendedName>
        <fullName>Multidrug resistance efflux pump SepA</fullName>
    </recommendedName>
    <alternativeName>
        <fullName>Antiseptic resistance protein SepA</fullName>
    </alternativeName>
    <alternativeName>
        <fullName>Staphylococcal efflux pump A</fullName>
    </alternativeName>
</protein>
<proteinExistence type="inferred from homology"/>
<reference key="1">
    <citation type="journal article" date="2008" name="J. Bacteriol.">
        <title>Genome sequence of Staphylococcus aureus strain Newman and comparative analysis of staphylococcal genomes: polymorphism and evolution of two major pathogenicity islands.</title>
        <authorList>
            <person name="Baba T."/>
            <person name="Bae T."/>
            <person name="Schneewind O."/>
            <person name="Takeuchi F."/>
            <person name="Hiramatsu K."/>
        </authorList>
    </citation>
    <scope>NUCLEOTIDE SEQUENCE [LARGE SCALE GENOMIC DNA]</scope>
    <source>
        <strain>Newman</strain>
    </source>
</reference>
<sequence length="157" mass="18899">MIVNYLKHKFYNLLTTMIVLFIFVLSGAIFLTFLGFGLYGLSRILIYFRLGDFTYNRSMYDNLLYYGSYIIFGYFIIFAVEHLMDYFRKMLPENAYFRGATFHLISYTVATTLFYFIIHLNYVYINIDFWVIMVIIGFLYVCKLQFYPESKNLNNRK</sequence>
<comment type="function">
    <text evidence="1">Involved in multidrug efflux.</text>
</comment>
<comment type="subcellular location">
    <subcellularLocation>
        <location evidence="3">Cell membrane</location>
        <topology evidence="3">Multi-pass membrane protein</topology>
    </subcellularLocation>
</comment>
<comment type="similarity">
    <text evidence="3">Belongs to the multidrug resistance efflux pump SepA family.</text>
</comment>
<evidence type="ECO:0000250" key="1"/>
<evidence type="ECO:0000255" key="2"/>
<evidence type="ECO:0000305" key="3"/>
<dbReference type="EMBL" id="AP009351">
    <property type="protein sequence ID" value="BAF68341.1"/>
    <property type="molecule type" value="Genomic_DNA"/>
</dbReference>
<dbReference type="RefSeq" id="WP_000636857.1">
    <property type="nucleotide sequence ID" value="NZ_JBBIAE010000018.1"/>
</dbReference>
<dbReference type="KEGG" id="sae:NWMN_2069"/>
<dbReference type="HOGENOM" id="CLU_151983_0_0_9"/>
<dbReference type="Proteomes" id="UP000006386">
    <property type="component" value="Chromosome"/>
</dbReference>
<dbReference type="GO" id="GO:0005886">
    <property type="term" value="C:plasma membrane"/>
    <property type="evidence" value="ECO:0007669"/>
    <property type="project" value="UniProtKB-SubCell"/>
</dbReference>
<dbReference type="InterPro" id="IPR031396">
    <property type="entry name" value="SepA"/>
</dbReference>
<dbReference type="Pfam" id="PF17080">
    <property type="entry name" value="SepA"/>
    <property type="match status" value="1"/>
</dbReference>
<keyword id="KW-1003">Cell membrane</keyword>
<keyword id="KW-0472">Membrane</keyword>
<keyword id="KW-0812">Transmembrane</keyword>
<keyword id="KW-1133">Transmembrane helix</keyword>
<keyword id="KW-0813">Transport</keyword>
<gene>
    <name type="primary">sepA</name>
    <name type="ordered locus">NWMN_2069</name>
</gene>
<name>MDEP_STAAE</name>
<organism>
    <name type="scientific">Staphylococcus aureus (strain Newman)</name>
    <dbReference type="NCBI Taxonomy" id="426430"/>
    <lineage>
        <taxon>Bacteria</taxon>
        <taxon>Bacillati</taxon>
        <taxon>Bacillota</taxon>
        <taxon>Bacilli</taxon>
        <taxon>Bacillales</taxon>
        <taxon>Staphylococcaceae</taxon>
        <taxon>Staphylococcus</taxon>
    </lineage>
</organism>
<feature type="chain" id="PRO_0000351492" description="Multidrug resistance efflux pump SepA">
    <location>
        <begin position="1"/>
        <end position="157"/>
    </location>
</feature>
<feature type="transmembrane region" description="Helical" evidence="2">
    <location>
        <begin position="18"/>
        <end position="38"/>
    </location>
</feature>
<feature type="transmembrane region" description="Helical" evidence="2">
    <location>
        <begin position="63"/>
        <end position="83"/>
    </location>
</feature>
<feature type="transmembrane region" description="Helical" evidence="2">
    <location>
        <begin position="100"/>
        <end position="120"/>
    </location>
</feature>
<feature type="transmembrane region" description="Helical" evidence="2">
    <location>
        <begin position="122"/>
        <end position="142"/>
    </location>
</feature>